<sequence>MPMKFEFTFSKSHRPAGGSAVLLQVAGAKEPAGVAVVDPEGVLPKAAKIGKFSGKALSSLDIVAPHGSPADRIILLGLGDAAALTSHDWLKAGGAAAAKLRSADKATIFLDAPGVDVTGKAAADFALGMEMNAYAFDSYKTRKSDDESKSAQKVVKVTIVTGMVIAAKKAFATVQSIGEGVFLARDLVNEPANVLGPVEFAARAKELEKLGVEVETLTEREMKKLGMGALLGVAQGSSRPPRLVVMQWKGGKAKDKPLAFIGKGVVFDTGGISIKPASGMEEMKGDMGGAAAVTGLMHVLAARKASVNAVGIIGLVENMPDGSAQRPGDIVTSMSGQTIEVINTDAEGRLVLCDALWYCNDRFKPKAMIDLATLTGAIMVALSNHYAGLFSNDDRLAEQLLKAGTTTHERLWRMPLGKEYDKMIDSKFADMKNTGGRHGGSVTAAQFLKRFVKDTPWAHLDIAGTAMGSPTDEINQSWGSGFGVRLLDELVRANYES</sequence>
<organism>
    <name type="scientific">Sinorhizobium fredii (strain NBRC 101917 / NGR234)</name>
    <dbReference type="NCBI Taxonomy" id="394"/>
    <lineage>
        <taxon>Bacteria</taxon>
        <taxon>Pseudomonadati</taxon>
        <taxon>Pseudomonadota</taxon>
        <taxon>Alphaproteobacteria</taxon>
        <taxon>Hyphomicrobiales</taxon>
        <taxon>Rhizobiaceae</taxon>
        <taxon>Sinorhizobium/Ensifer group</taxon>
        <taxon>Sinorhizobium</taxon>
    </lineage>
</organism>
<reference key="1">
    <citation type="journal article" date="2009" name="Appl. Environ. Microbiol.">
        <title>Rhizobium sp. strain NGR234 possesses a remarkable number of secretion systems.</title>
        <authorList>
            <person name="Schmeisser C."/>
            <person name="Liesegang H."/>
            <person name="Krysciak D."/>
            <person name="Bakkou N."/>
            <person name="Le Quere A."/>
            <person name="Wollherr A."/>
            <person name="Heinemeyer I."/>
            <person name="Morgenstern B."/>
            <person name="Pommerening-Roeser A."/>
            <person name="Flores M."/>
            <person name="Palacios R."/>
            <person name="Brenner S."/>
            <person name="Gottschalk G."/>
            <person name="Schmitz R.A."/>
            <person name="Broughton W.J."/>
            <person name="Perret X."/>
            <person name="Strittmatter A.W."/>
            <person name="Streit W.R."/>
        </authorList>
    </citation>
    <scope>NUCLEOTIDE SEQUENCE [LARGE SCALE GENOMIC DNA]</scope>
    <source>
        <strain>NBRC 101917 / NGR234</strain>
    </source>
</reference>
<name>AMPA_SINFN</name>
<comment type="function">
    <text evidence="1">Presumably involved in the processing and regular turnover of intracellular proteins. Catalyzes the removal of unsubstituted N-terminal amino acids from various peptides.</text>
</comment>
<comment type="catalytic activity">
    <reaction evidence="1">
        <text>Release of an N-terminal amino acid, Xaa-|-Yaa-, in which Xaa is preferably Leu, but may be other amino acids including Pro although not Arg or Lys, and Yaa may be Pro. Amino acid amides and methyl esters are also readily hydrolyzed, but rates on arylamides are exceedingly low.</text>
        <dbReference type="EC" id="3.4.11.1"/>
    </reaction>
</comment>
<comment type="catalytic activity">
    <reaction evidence="1">
        <text>Release of an N-terminal amino acid, preferentially leucine, but not glutamic or aspartic acids.</text>
        <dbReference type="EC" id="3.4.11.10"/>
    </reaction>
</comment>
<comment type="cofactor">
    <cofactor evidence="1">
        <name>Mn(2+)</name>
        <dbReference type="ChEBI" id="CHEBI:29035"/>
    </cofactor>
    <text evidence="1">Binds 2 manganese ions per subunit.</text>
</comment>
<comment type="subcellular location">
    <subcellularLocation>
        <location evidence="1">Cytoplasm</location>
    </subcellularLocation>
</comment>
<comment type="similarity">
    <text evidence="1">Belongs to the peptidase M17 family.</text>
</comment>
<protein>
    <recommendedName>
        <fullName evidence="1">Probable cytosol aminopeptidase</fullName>
        <ecNumber evidence="1">3.4.11.1</ecNumber>
    </recommendedName>
    <alternativeName>
        <fullName evidence="1">Leucine aminopeptidase</fullName>
        <shortName evidence="1">LAP</shortName>
        <ecNumber evidence="1">3.4.11.10</ecNumber>
    </alternativeName>
    <alternativeName>
        <fullName evidence="1">Leucyl aminopeptidase</fullName>
    </alternativeName>
</protein>
<accession>C3M9C8</accession>
<keyword id="KW-0031">Aminopeptidase</keyword>
<keyword id="KW-0963">Cytoplasm</keyword>
<keyword id="KW-0378">Hydrolase</keyword>
<keyword id="KW-0464">Manganese</keyword>
<keyword id="KW-0479">Metal-binding</keyword>
<keyword id="KW-0645">Protease</keyword>
<keyword id="KW-1185">Reference proteome</keyword>
<feature type="chain" id="PRO_1000192721" description="Probable cytosol aminopeptidase">
    <location>
        <begin position="1"/>
        <end position="497"/>
    </location>
</feature>
<feature type="active site" evidence="1">
    <location>
        <position position="275"/>
    </location>
</feature>
<feature type="active site" evidence="1">
    <location>
        <position position="349"/>
    </location>
</feature>
<feature type="binding site" evidence="1">
    <location>
        <position position="263"/>
    </location>
    <ligand>
        <name>Mn(2+)</name>
        <dbReference type="ChEBI" id="CHEBI:29035"/>
        <label>2</label>
    </ligand>
</feature>
<feature type="binding site" evidence="1">
    <location>
        <position position="268"/>
    </location>
    <ligand>
        <name>Mn(2+)</name>
        <dbReference type="ChEBI" id="CHEBI:29035"/>
        <label>1</label>
    </ligand>
</feature>
<feature type="binding site" evidence="1">
    <location>
        <position position="268"/>
    </location>
    <ligand>
        <name>Mn(2+)</name>
        <dbReference type="ChEBI" id="CHEBI:29035"/>
        <label>2</label>
    </ligand>
</feature>
<feature type="binding site" evidence="1">
    <location>
        <position position="286"/>
    </location>
    <ligand>
        <name>Mn(2+)</name>
        <dbReference type="ChEBI" id="CHEBI:29035"/>
        <label>2</label>
    </ligand>
</feature>
<feature type="binding site" evidence="1">
    <location>
        <position position="345"/>
    </location>
    <ligand>
        <name>Mn(2+)</name>
        <dbReference type="ChEBI" id="CHEBI:29035"/>
        <label>1</label>
    </ligand>
</feature>
<feature type="binding site" evidence="1">
    <location>
        <position position="347"/>
    </location>
    <ligand>
        <name>Mn(2+)</name>
        <dbReference type="ChEBI" id="CHEBI:29035"/>
        <label>1</label>
    </ligand>
</feature>
<feature type="binding site" evidence="1">
    <location>
        <position position="347"/>
    </location>
    <ligand>
        <name>Mn(2+)</name>
        <dbReference type="ChEBI" id="CHEBI:29035"/>
        <label>2</label>
    </ligand>
</feature>
<proteinExistence type="inferred from homology"/>
<dbReference type="EC" id="3.4.11.1" evidence="1"/>
<dbReference type="EC" id="3.4.11.10" evidence="1"/>
<dbReference type="EMBL" id="CP001389">
    <property type="protein sequence ID" value="ACP24694.1"/>
    <property type="molecule type" value="Genomic_DNA"/>
</dbReference>
<dbReference type="RefSeq" id="WP_012707478.1">
    <property type="nucleotide sequence ID" value="NC_012587.1"/>
</dbReference>
<dbReference type="RefSeq" id="YP_002825447.1">
    <property type="nucleotide sequence ID" value="NC_012587.1"/>
</dbReference>
<dbReference type="SMR" id="C3M9C8"/>
<dbReference type="STRING" id="394.NGR_c09040"/>
<dbReference type="KEGG" id="rhi:NGR_c09040"/>
<dbReference type="PATRIC" id="fig|394.7.peg.3720"/>
<dbReference type="eggNOG" id="COG0260">
    <property type="taxonomic scope" value="Bacteria"/>
</dbReference>
<dbReference type="HOGENOM" id="CLU_013734_6_0_5"/>
<dbReference type="OrthoDB" id="9809354at2"/>
<dbReference type="Proteomes" id="UP000001054">
    <property type="component" value="Chromosome"/>
</dbReference>
<dbReference type="GO" id="GO:0005737">
    <property type="term" value="C:cytoplasm"/>
    <property type="evidence" value="ECO:0007669"/>
    <property type="project" value="UniProtKB-SubCell"/>
</dbReference>
<dbReference type="GO" id="GO:0030145">
    <property type="term" value="F:manganese ion binding"/>
    <property type="evidence" value="ECO:0007669"/>
    <property type="project" value="UniProtKB-UniRule"/>
</dbReference>
<dbReference type="GO" id="GO:0070006">
    <property type="term" value="F:metalloaminopeptidase activity"/>
    <property type="evidence" value="ECO:0007669"/>
    <property type="project" value="InterPro"/>
</dbReference>
<dbReference type="GO" id="GO:0006508">
    <property type="term" value="P:proteolysis"/>
    <property type="evidence" value="ECO:0007669"/>
    <property type="project" value="UniProtKB-KW"/>
</dbReference>
<dbReference type="CDD" id="cd00433">
    <property type="entry name" value="Peptidase_M17"/>
    <property type="match status" value="1"/>
</dbReference>
<dbReference type="Gene3D" id="3.40.220.10">
    <property type="entry name" value="Leucine Aminopeptidase, subunit E, domain 1"/>
    <property type="match status" value="1"/>
</dbReference>
<dbReference type="Gene3D" id="3.40.630.10">
    <property type="entry name" value="Zn peptidases"/>
    <property type="match status" value="1"/>
</dbReference>
<dbReference type="HAMAP" id="MF_00181">
    <property type="entry name" value="Cytosol_peptidase_M17"/>
    <property type="match status" value="1"/>
</dbReference>
<dbReference type="InterPro" id="IPR011356">
    <property type="entry name" value="Leucine_aapep/pepB"/>
</dbReference>
<dbReference type="InterPro" id="IPR043472">
    <property type="entry name" value="Macro_dom-like"/>
</dbReference>
<dbReference type="InterPro" id="IPR000819">
    <property type="entry name" value="Peptidase_M17_C"/>
</dbReference>
<dbReference type="InterPro" id="IPR023042">
    <property type="entry name" value="Peptidase_M17_leu_NH2_pept"/>
</dbReference>
<dbReference type="InterPro" id="IPR008283">
    <property type="entry name" value="Peptidase_M17_N"/>
</dbReference>
<dbReference type="NCBIfam" id="NF002073">
    <property type="entry name" value="PRK00913.1-2"/>
    <property type="match status" value="1"/>
</dbReference>
<dbReference type="NCBIfam" id="NF002074">
    <property type="entry name" value="PRK00913.1-4"/>
    <property type="match status" value="1"/>
</dbReference>
<dbReference type="NCBIfam" id="NF002075">
    <property type="entry name" value="PRK00913.2-2"/>
    <property type="match status" value="1"/>
</dbReference>
<dbReference type="NCBIfam" id="NF002077">
    <property type="entry name" value="PRK00913.2-4"/>
    <property type="match status" value="1"/>
</dbReference>
<dbReference type="NCBIfam" id="NF002083">
    <property type="entry name" value="PRK00913.3-5"/>
    <property type="match status" value="1"/>
</dbReference>
<dbReference type="PANTHER" id="PTHR11963:SF23">
    <property type="entry name" value="CYTOSOL AMINOPEPTIDASE"/>
    <property type="match status" value="1"/>
</dbReference>
<dbReference type="PANTHER" id="PTHR11963">
    <property type="entry name" value="LEUCINE AMINOPEPTIDASE-RELATED"/>
    <property type="match status" value="1"/>
</dbReference>
<dbReference type="Pfam" id="PF00883">
    <property type="entry name" value="Peptidase_M17"/>
    <property type="match status" value="1"/>
</dbReference>
<dbReference type="Pfam" id="PF02789">
    <property type="entry name" value="Peptidase_M17_N"/>
    <property type="match status" value="1"/>
</dbReference>
<dbReference type="PRINTS" id="PR00481">
    <property type="entry name" value="LAMNOPPTDASE"/>
</dbReference>
<dbReference type="SUPFAM" id="SSF52949">
    <property type="entry name" value="Macro domain-like"/>
    <property type="match status" value="1"/>
</dbReference>
<dbReference type="SUPFAM" id="SSF53187">
    <property type="entry name" value="Zn-dependent exopeptidases"/>
    <property type="match status" value="1"/>
</dbReference>
<dbReference type="PROSITE" id="PS00631">
    <property type="entry name" value="CYTOSOL_AP"/>
    <property type="match status" value="1"/>
</dbReference>
<gene>
    <name evidence="1" type="primary">pepA</name>
    <name type="ordered locus">NGR_c09040</name>
</gene>
<evidence type="ECO:0000255" key="1">
    <source>
        <dbReference type="HAMAP-Rule" id="MF_00181"/>
    </source>
</evidence>